<gene>
    <name type="primary">tvp-18</name>
    <name type="ORF">H4H7.080</name>
    <name type="ORF">NCU04760</name>
</gene>
<accession>Q7S693</accession>
<sequence length="149" mass="16192">MALKDEFATRNFSIYGQWLGILSMILCFALGIANIFTFRPIIIVFSVITLCFSFVILFVEVPLLLRICPTSPTFDNLIRKISTNYTRAAAYGVMAVVVFLSCIDRTTSLLVPGIFLSFTGICYALAALKGQAFVGSKTLGGAGVAQMIV</sequence>
<proteinExistence type="inferred from homology"/>
<evidence type="ECO:0000250" key="1"/>
<evidence type="ECO:0000255" key="2"/>
<evidence type="ECO:0000305" key="3"/>
<name>TVP18_NEUCR</name>
<keyword id="KW-0325">Glycoprotein</keyword>
<keyword id="KW-0333">Golgi apparatus</keyword>
<keyword id="KW-0472">Membrane</keyword>
<keyword id="KW-1185">Reference proteome</keyword>
<keyword id="KW-0812">Transmembrane</keyword>
<keyword id="KW-1133">Transmembrane helix</keyword>
<reference key="1">
    <citation type="journal article" date="2003" name="Nucleic Acids Res.">
        <title>What's in the genome of a filamentous fungus? Analysis of the Neurospora genome sequence.</title>
        <authorList>
            <person name="Mannhaupt G."/>
            <person name="Montrone C."/>
            <person name="Haase D."/>
            <person name="Mewes H.-W."/>
            <person name="Aign V."/>
            <person name="Hoheisel J.D."/>
            <person name="Fartmann B."/>
            <person name="Nyakatura G."/>
            <person name="Kempken F."/>
            <person name="Maier J."/>
            <person name="Schulte U."/>
        </authorList>
    </citation>
    <scope>NUCLEOTIDE SEQUENCE [LARGE SCALE GENOMIC DNA]</scope>
    <source>
        <strain>ATCC 24698 / 74-OR23-1A / CBS 708.71 / DSM 1257 / FGSC 987</strain>
    </source>
</reference>
<reference key="2">
    <citation type="journal article" date="2003" name="Nature">
        <title>The genome sequence of the filamentous fungus Neurospora crassa.</title>
        <authorList>
            <person name="Galagan J.E."/>
            <person name="Calvo S.E."/>
            <person name="Borkovich K.A."/>
            <person name="Selker E.U."/>
            <person name="Read N.D."/>
            <person name="Jaffe D.B."/>
            <person name="FitzHugh W."/>
            <person name="Ma L.-J."/>
            <person name="Smirnov S."/>
            <person name="Purcell S."/>
            <person name="Rehman B."/>
            <person name="Elkins T."/>
            <person name="Engels R."/>
            <person name="Wang S."/>
            <person name="Nielsen C.B."/>
            <person name="Butler J."/>
            <person name="Endrizzi M."/>
            <person name="Qui D."/>
            <person name="Ianakiev P."/>
            <person name="Bell-Pedersen D."/>
            <person name="Nelson M.A."/>
            <person name="Werner-Washburne M."/>
            <person name="Selitrennikoff C.P."/>
            <person name="Kinsey J.A."/>
            <person name="Braun E.L."/>
            <person name="Zelter A."/>
            <person name="Schulte U."/>
            <person name="Kothe G.O."/>
            <person name="Jedd G."/>
            <person name="Mewes H.-W."/>
            <person name="Staben C."/>
            <person name="Marcotte E."/>
            <person name="Greenberg D."/>
            <person name="Roy A."/>
            <person name="Foley K."/>
            <person name="Naylor J."/>
            <person name="Stange-Thomann N."/>
            <person name="Barrett R."/>
            <person name="Gnerre S."/>
            <person name="Kamal M."/>
            <person name="Kamvysselis M."/>
            <person name="Mauceli E.W."/>
            <person name="Bielke C."/>
            <person name="Rudd S."/>
            <person name="Frishman D."/>
            <person name="Krystofova S."/>
            <person name="Rasmussen C."/>
            <person name="Metzenberg R.L."/>
            <person name="Perkins D.D."/>
            <person name="Kroken S."/>
            <person name="Cogoni C."/>
            <person name="Macino G."/>
            <person name="Catcheside D.E.A."/>
            <person name="Li W."/>
            <person name="Pratt R.J."/>
            <person name="Osmani S.A."/>
            <person name="DeSouza C.P.C."/>
            <person name="Glass N.L."/>
            <person name="Orbach M.J."/>
            <person name="Berglund J.A."/>
            <person name="Voelker R."/>
            <person name="Yarden O."/>
            <person name="Plamann M."/>
            <person name="Seiler S."/>
            <person name="Dunlap J.C."/>
            <person name="Radford A."/>
            <person name="Aramayo R."/>
            <person name="Natvig D.O."/>
            <person name="Alex L.A."/>
            <person name="Mannhaupt G."/>
            <person name="Ebbole D.J."/>
            <person name="Freitag M."/>
            <person name="Paulsen I."/>
            <person name="Sachs M.S."/>
            <person name="Lander E.S."/>
            <person name="Nusbaum C."/>
            <person name="Birren B.W."/>
        </authorList>
    </citation>
    <scope>NUCLEOTIDE SEQUENCE [LARGE SCALE GENOMIC DNA]</scope>
    <source>
        <strain>ATCC 24698 / 74-OR23-1A / CBS 708.71 / DSM 1257 / FGSC 987</strain>
    </source>
</reference>
<dbReference type="EMBL" id="BX908811">
    <property type="protein sequence ID" value="CAF06120.1"/>
    <property type="molecule type" value="Genomic_DNA"/>
</dbReference>
<dbReference type="EMBL" id="CM002241">
    <property type="protein sequence ID" value="EAA31057.1"/>
    <property type="molecule type" value="Genomic_DNA"/>
</dbReference>
<dbReference type="RefSeq" id="XP_960293.1">
    <property type="nucleotide sequence ID" value="XM_955200.2"/>
</dbReference>
<dbReference type="FunCoup" id="Q7S693">
    <property type="interactions" value="44"/>
</dbReference>
<dbReference type="STRING" id="367110.Q7S693"/>
<dbReference type="GlyCosmos" id="Q7S693">
    <property type="glycosylation" value="1 site, No reported glycans"/>
</dbReference>
<dbReference type="PaxDb" id="5141-EFNCRP00000004581"/>
<dbReference type="EnsemblFungi" id="EAA31057">
    <property type="protein sequence ID" value="EAA31057"/>
    <property type="gene ID" value="NCU04760"/>
</dbReference>
<dbReference type="GeneID" id="3876440"/>
<dbReference type="KEGG" id="ncr:NCU04760"/>
<dbReference type="VEuPathDB" id="FungiDB:NCU04760"/>
<dbReference type="HOGENOM" id="CLU_118698_0_0_1"/>
<dbReference type="InParanoid" id="Q7S693"/>
<dbReference type="OMA" id="IYAQWLG"/>
<dbReference type="OrthoDB" id="5591789at2759"/>
<dbReference type="Proteomes" id="UP000001805">
    <property type="component" value="Chromosome 5, Linkage Group VI"/>
</dbReference>
<dbReference type="GO" id="GO:0000139">
    <property type="term" value="C:Golgi membrane"/>
    <property type="evidence" value="ECO:0000318"/>
    <property type="project" value="GO_Central"/>
</dbReference>
<dbReference type="GO" id="GO:0016192">
    <property type="term" value="P:vesicle-mediated transport"/>
    <property type="evidence" value="ECO:0000318"/>
    <property type="project" value="GO_Central"/>
</dbReference>
<dbReference type="InterPro" id="IPR019365">
    <property type="entry name" value="TVP18/Ca-channel_flower"/>
</dbReference>
<dbReference type="PANTHER" id="PTHR13314">
    <property type="entry name" value="CALCIUM CHANNEL FLOWER HOMOLOG"/>
    <property type="match status" value="1"/>
</dbReference>
<dbReference type="PANTHER" id="PTHR13314:SF2">
    <property type="entry name" value="CALCIUM CHANNEL FLOWER HOMOLOG"/>
    <property type="match status" value="1"/>
</dbReference>
<dbReference type="Pfam" id="PF10233">
    <property type="entry name" value="Cg6151-P"/>
    <property type="match status" value="1"/>
</dbReference>
<dbReference type="SMART" id="SM01077">
    <property type="entry name" value="Cg6151-P"/>
    <property type="match status" value="1"/>
</dbReference>
<organism>
    <name type="scientific">Neurospora crassa (strain ATCC 24698 / 74-OR23-1A / CBS 708.71 / DSM 1257 / FGSC 987)</name>
    <dbReference type="NCBI Taxonomy" id="367110"/>
    <lineage>
        <taxon>Eukaryota</taxon>
        <taxon>Fungi</taxon>
        <taxon>Dikarya</taxon>
        <taxon>Ascomycota</taxon>
        <taxon>Pezizomycotina</taxon>
        <taxon>Sordariomycetes</taxon>
        <taxon>Sordariomycetidae</taxon>
        <taxon>Sordariales</taxon>
        <taxon>Sordariaceae</taxon>
        <taxon>Neurospora</taxon>
    </lineage>
</organism>
<feature type="chain" id="PRO_0000343024" description="Golgi apparatus membrane protein tvp-18">
    <location>
        <begin position="1"/>
        <end position="149"/>
    </location>
</feature>
<feature type="transmembrane region" description="Helical" evidence="2">
    <location>
        <begin position="18"/>
        <end position="38"/>
    </location>
</feature>
<feature type="transmembrane region" description="Helical" evidence="2">
    <location>
        <begin position="41"/>
        <end position="61"/>
    </location>
</feature>
<feature type="transmembrane region" description="Helical" evidence="2">
    <location>
        <begin position="84"/>
        <end position="103"/>
    </location>
</feature>
<feature type="transmembrane region" description="Helical" evidence="2">
    <location>
        <begin position="108"/>
        <end position="128"/>
    </location>
</feature>
<feature type="glycosylation site" description="N-linked (GlcNAc...) asparagine" evidence="2">
    <location>
        <position position="11"/>
    </location>
</feature>
<comment type="function">
    <text evidence="1">Golgi membrane protein involved in vesicular trafficking.</text>
</comment>
<comment type="subcellular location">
    <subcellularLocation>
        <location evidence="1">Golgi apparatus membrane</location>
        <topology evidence="1">Multi-pass membrane protein</topology>
    </subcellularLocation>
</comment>
<comment type="similarity">
    <text evidence="3">Belongs to the TVP18 family.</text>
</comment>
<protein>
    <recommendedName>
        <fullName>Golgi apparatus membrane protein tvp-18</fullName>
    </recommendedName>
</protein>